<name>PURA_MONBE</name>
<protein>
    <recommendedName>
        <fullName evidence="2">Adenylosuccinate synthetase</fullName>
        <shortName evidence="2">AMPSase</shortName>
        <shortName evidence="2">AdSS</shortName>
        <ecNumber evidence="2">6.3.4.4</ecNumber>
    </recommendedName>
    <alternativeName>
        <fullName evidence="2">IMP--aspartate ligase</fullName>
    </alternativeName>
</protein>
<evidence type="ECO:0000250" key="1"/>
<evidence type="ECO:0000255" key="2">
    <source>
        <dbReference type="HAMAP-Rule" id="MF_03125"/>
    </source>
</evidence>
<gene>
    <name type="ORF">20027</name>
</gene>
<reference key="1">
    <citation type="journal article" date="2008" name="Nature">
        <title>The genome of the choanoflagellate Monosiga brevicollis and the origin of metazoans.</title>
        <authorList>
            <consortium name="JGI Sequencing"/>
            <person name="King N."/>
            <person name="Westbrook M.J."/>
            <person name="Young S.L."/>
            <person name="Kuo A."/>
            <person name="Abedin M."/>
            <person name="Chapman J."/>
            <person name="Fairclough S."/>
            <person name="Hellsten U."/>
            <person name="Isogai Y."/>
            <person name="Letunic I."/>
            <person name="Marr M."/>
            <person name="Pincus D."/>
            <person name="Putnam N."/>
            <person name="Rokas A."/>
            <person name="Wright K.J."/>
            <person name="Zuzow R."/>
            <person name="Dirks W."/>
            <person name="Good M."/>
            <person name="Goodstein D."/>
            <person name="Lemons D."/>
            <person name="Li W."/>
            <person name="Lyons J.B."/>
            <person name="Morris A."/>
            <person name="Nichols S."/>
            <person name="Richter D.J."/>
            <person name="Salamov A."/>
            <person name="Bork P."/>
            <person name="Lim W.A."/>
            <person name="Manning G."/>
            <person name="Miller W.T."/>
            <person name="McGinnis W."/>
            <person name="Shapiro H."/>
            <person name="Tjian R."/>
            <person name="Grigoriev I.V."/>
            <person name="Rokhsar D."/>
        </authorList>
    </citation>
    <scope>NUCLEOTIDE SEQUENCE [LARGE SCALE GENOMIC DNA]</scope>
    <source>
        <strain>MX1 / ATCC 50154</strain>
    </source>
</reference>
<sequence length="431" mass="47271">MAQQKVAVVLGLQWGDEGKGKLVDVLAEDADVVARFAGGNNAGHTVVVDNISYDFHLLPSGIGHAKCDCVIGNGVVIHLPGLYEEVEKNMAKGPHLQGWQSRLKISDRAHLVLDLHQKVDGMKEEERGLDKIGTTKKGIGPTYSSKAIRHGLRVCDLMGDFGIFKQKFLQVVEHYQKLFPSLEVDVDAQLKAFEGYAEKVRPMVTDTTLLVHRYLKENKRVLLEGANATMLDLDFGTYPYVTSSSCCVGGICTGLGLPPQAVGDVYGVVKAYTTRVGDGAFPTEDFAEVGNYLQTKGHEYGVTTGRKRRCGWLDMMVVNYACMINGVTKICLTKLDVLDELETIKIAVAYKKGGEALLGMPASQQVLNEVEVEYVDMPGWQTNISEIRDFEALPTQAQAYVRKVEELSGVPVKWIGVGPAREAMIIVPPRQ</sequence>
<dbReference type="EC" id="6.3.4.4" evidence="2"/>
<dbReference type="EMBL" id="CH991545">
    <property type="protein sequence ID" value="EDQ91526.1"/>
    <property type="molecule type" value="Genomic_DNA"/>
</dbReference>
<dbReference type="RefSeq" id="XP_001743948.1">
    <property type="nucleotide sequence ID" value="XM_001743896.1"/>
</dbReference>
<dbReference type="SMR" id="A9UTP3"/>
<dbReference type="FunCoup" id="A9UTP3">
    <property type="interactions" value="1415"/>
</dbReference>
<dbReference type="STRING" id="81824.A9UTP3"/>
<dbReference type="EnsemblProtists" id="EDQ91526">
    <property type="protein sequence ID" value="EDQ91526"/>
    <property type="gene ID" value="MONBRDRAFT_20027"/>
</dbReference>
<dbReference type="KEGG" id="mbr:MONBRDRAFT_20027"/>
<dbReference type="eggNOG" id="KOG1355">
    <property type="taxonomic scope" value="Eukaryota"/>
</dbReference>
<dbReference type="InParanoid" id="A9UTP3"/>
<dbReference type="OMA" id="FHHAKPI"/>
<dbReference type="UniPathway" id="UPA00075">
    <property type="reaction ID" value="UER00335"/>
</dbReference>
<dbReference type="Proteomes" id="UP000001357">
    <property type="component" value="Unassembled WGS sequence"/>
</dbReference>
<dbReference type="GO" id="GO:0005737">
    <property type="term" value="C:cytoplasm"/>
    <property type="evidence" value="ECO:0000318"/>
    <property type="project" value="GO_Central"/>
</dbReference>
<dbReference type="GO" id="GO:0004019">
    <property type="term" value="F:adenylosuccinate synthase activity"/>
    <property type="evidence" value="ECO:0000318"/>
    <property type="project" value="GO_Central"/>
</dbReference>
<dbReference type="GO" id="GO:0005525">
    <property type="term" value="F:GTP binding"/>
    <property type="evidence" value="ECO:0007669"/>
    <property type="project" value="UniProtKB-UniRule"/>
</dbReference>
<dbReference type="GO" id="GO:0000287">
    <property type="term" value="F:magnesium ion binding"/>
    <property type="evidence" value="ECO:0007669"/>
    <property type="project" value="UniProtKB-UniRule"/>
</dbReference>
<dbReference type="GO" id="GO:0044208">
    <property type="term" value="P:'de novo' AMP biosynthetic process"/>
    <property type="evidence" value="ECO:0000318"/>
    <property type="project" value="GO_Central"/>
</dbReference>
<dbReference type="GO" id="GO:0046040">
    <property type="term" value="P:IMP metabolic process"/>
    <property type="evidence" value="ECO:0000318"/>
    <property type="project" value="GO_Central"/>
</dbReference>
<dbReference type="CDD" id="cd03108">
    <property type="entry name" value="AdSS"/>
    <property type="match status" value="1"/>
</dbReference>
<dbReference type="FunFam" id="3.90.170.10:FF:000001">
    <property type="entry name" value="Adenylosuccinate synthetase"/>
    <property type="match status" value="1"/>
</dbReference>
<dbReference type="FunFam" id="1.10.300.10:FF:000002">
    <property type="entry name" value="Adenylosuccinate synthetase, chloroplastic"/>
    <property type="match status" value="1"/>
</dbReference>
<dbReference type="Gene3D" id="3.40.440.10">
    <property type="entry name" value="Adenylosuccinate Synthetase, subunit A, domain 1"/>
    <property type="match status" value="1"/>
</dbReference>
<dbReference type="Gene3D" id="1.10.300.10">
    <property type="entry name" value="Adenylosuccinate Synthetase, subunit A, domain 2"/>
    <property type="match status" value="1"/>
</dbReference>
<dbReference type="Gene3D" id="3.90.170.10">
    <property type="entry name" value="Adenylosuccinate Synthetase, subunit A, domain 3"/>
    <property type="match status" value="1"/>
</dbReference>
<dbReference type="HAMAP" id="MF_00011">
    <property type="entry name" value="Adenylosucc_synth"/>
    <property type="match status" value="1"/>
</dbReference>
<dbReference type="InterPro" id="IPR018220">
    <property type="entry name" value="Adenylosuccin_syn_GTP-bd"/>
</dbReference>
<dbReference type="InterPro" id="IPR033128">
    <property type="entry name" value="Adenylosuccin_syn_Lys_AS"/>
</dbReference>
<dbReference type="InterPro" id="IPR042109">
    <property type="entry name" value="Adenylosuccinate_synth_dom1"/>
</dbReference>
<dbReference type="InterPro" id="IPR042110">
    <property type="entry name" value="Adenylosuccinate_synth_dom2"/>
</dbReference>
<dbReference type="InterPro" id="IPR042111">
    <property type="entry name" value="Adenylosuccinate_synth_dom3"/>
</dbReference>
<dbReference type="InterPro" id="IPR001114">
    <property type="entry name" value="Adenylosuccinate_synthetase"/>
</dbReference>
<dbReference type="InterPro" id="IPR027417">
    <property type="entry name" value="P-loop_NTPase"/>
</dbReference>
<dbReference type="NCBIfam" id="NF002223">
    <property type="entry name" value="PRK01117.1"/>
    <property type="match status" value="1"/>
</dbReference>
<dbReference type="NCBIfam" id="TIGR00184">
    <property type="entry name" value="purA"/>
    <property type="match status" value="1"/>
</dbReference>
<dbReference type="PANTHER" id="PTHR11846">
    <property type="entry name" value="ADENYLOSUCCINATE SYNTHETASE"/>
    <property type="match status" value="1"/>
</dbReference>
<dbReference type="PANTHER" id="PTHR11846:SF0">
    <property type="entry name" value="ADENYLOSUCCINATE SYNTHETASE"/>
    <property type="match status" value="1"/>
</dbReference>
<dbReference type="Pfam" id="PF00709">
    <property type="entry name" value="Adenylsucc_synt"/>
    <property type="match status" value="1"/>
</dbReference>
<dbReference type="SMART" id="SM00788">
    <property type="entry name" value="Adenylsucc_synt"/>
    <property type="match status" value="1"/>
</dbReference>
<dbReference type="SUPFAM" id="SSF52540">
    <property type="entry name" value="P-loop containing nucleoside triphosphate hydrolases"/>
    <property type="match status" value="1"/>
</dbReference>
<dbReference type="PROSITE" id="PS01266">
    <property type="entry name" value="ADENYLOSUCCIN_SYN_1"/>
    <property type="match status" value="1"/>
</dbReference>
<dbReference type="PROSITE" id="PS00513">
    <property type="entry name" value="ADENYLOSUCCIN_SYN_2"/>
    <property type="match status" value="1"/>
</dbReference>
<keyword id="KW-0963">Cytoplasm</keyword>
<keyword id="KW-0342">GTP-binding</keyword>
<keyword id="KW-0436">Ligase</keyword>
<keyword id="KW-0460">Magnesium</keyword>
<keyword id="KW-0479">Metal-binding</keyword>
<keyword id="KW-0547">Nucleotide-binding</keyword>
<keyword id="KW-0658">Purine biosynthesis</keyword>
<keyword id="KW-1185">Reference proteome</keyword>
<organism>
    <name type="scientific">Monosiga brevicollis</name>
    <name type="common">Choanoflagellate</name>
    <dbReference type="NCBI Taxonomy" id="81824"/>
    <lineage>
        <taxon>Eukaryota</taxon>
        <taxon>Choanoflagellata</taxon>
        <taxon>Craspedida</taxon>
        <taxon>Salpingoecidae</taxon>
        <taxon>Monosiga</taxon>
    </lineage>
</organism>
<accession>A9UTP3</accession>
<feature type="chain" id="PRO_0000399311" description="Adenylosuccinate synthetase">
    <location>
        <begin position="1"/>
        <end position="431"/>
    </location>
</feature>
<feature type="active site" description="Proton acceptor" evidence="2">
    <location>
        <position position="16"/>
    </location>
</feature>
<feature type="active site" description="Proton donor" evidence="2">
    <location>
        <position position="44"/>
    </location>
</feature>
<feature type="binding site" evidence="2">
    <location>
        <begin position="15"/>
        <end position="21"/>
    </location>
    <ligand>
        <name>GTP</name>
        <dbReference type="ChEBI" id="CHEBI:37565"/>
    </ligand>
</feature>
<feature type="binding site" description="in other chain" evidence="2">
    <location>
        <begin position="16"/>
        <end position="19"/>
    </location>
    <ligand>
        <name>IMP</name>
        <dbReference type="ChEBI" id="CHEBI:58053"/>
        <note>ligand shared between dimeric partners</note>
    </ligand>
</feature>
<feature type="binding site" evidence="2">
    <location>
        <position position="16"/>
    </location>
    <ligand>
        <name>Mg(2+)</name>
        <dbReference type="ChEBI" id="CHEBI:18420"/>
    </ligand>
</feature>
<feature type="binding site" description="in other chain" evidence="2">
    <location>
        <begin position="41"/>
        <end position="44"/>
    </location>
    <ligand>
        <name>IMP</name>
        <dbReference type="ChEBI" id="CHEBI:58053"/>
        <note>ligand shared between dimeric partners</note>
    </ligand>
</feature>
<feature type="binding site" evidence="2">
    <location>
        <begin position="43"/>
        <end position="45"/>
    </location>
    <ligand>
        <name>GTP</name>
        <dbReference type="ChEBI" id="CHEBI:37565"/>
    </ligand>
</feature>
<feature type="binding site" evidence="2">
    <location>
        <position position="43"/>
    </location>
    <ligand>
        <name>Mg(2+)</name>
        <dbReference type="ChEBI" id="CHEBI:18420"/>
    </ligand>
</feature>
<feature type="binding site" description="in other chain" evidence="2">
    <location>
        <position position="135"/>
    </location>
    <ligand>
        <name>IMP</name>
        <dbReference type="ChEBI" id="CHEBI:58053"/>
        <note>ligand shared between dimeric partners</note>
    </ligand>
</feature>
<feature type="binding site" evidence="2">
    <location>
        <position position="149"/>
    </location>
    <ligand>
        <name>IMP</name>
        <dbReference type="ChEBI" id="CHEBI:58053"/>
        <note>ligand shared between dimeric partners</note>
    </ligand>
</feature>
<feature type="binding site" description="in other chain" evidence="2">
    <location>
        <position position="227"/>
    </location>
    <ligand>
        <name>IMP</name>
        <dbReference type="ChEBI" id="CHEBI:58053"/>
        <note>ligand shared between dimeric partners</note>
    </ligand>
</feature>
<feature type="binding site" description="in other chain" evidence="2">
    <location>
        <position position="242"/>
    </location>
    <ligand>
        <name>IMP</name>
        <dbReference type="ChEBI" id="CHEBI:58053"/>
        <note>ligand shared between dimeric partners</note>
    </ligand>
</feature>
<feature type="binding site" evidence="2">
    <location>
        <begin position="302"/>
        <end position="308"/>
    </location>
    <ligand>
        <name>substrate</name>
    </ligand>
</feature>
<feature type="binding site" description="in other chain" evidence="2">
    <location>
        <position position="306"/>
    </location>
    <ligand>
        <name>IMP</name>
        <dbReference type="ChEBI" id="CHEBI:58053"/>
        <note>ligand shared between dimeric partners</note>
    </ligand>
</feature>
<feature type="binding site" evidence="2">
    <location>
        <position position="308"/>
    </location>
    <ligand>
        <name>GTP</name>
        <dbReference type="ChEBI" id="CHEBI:37565"/>
    </ligand>
</feature>
<feature type="binding site" evidence="2">
    <location>
        <begin position="334"/>
        <end position="336"/>
    </location>
    <ligand>
        <name>GTP</name>
        <dbReference type="ChEBI" id="CHEBI:37565"/>
    </ligand>
</feature>
<feature type="binding site" evidence="2">
    <location>
        <begin position="416"/>
        <end position="418"/>
    </location>
    <ligand>
        <name>GTP</name>
        <dbReference type="ChEBI" id="CHEBI:37565"/>
    </ligand>
</feature>
<proteinExistence type="inferred from homology"/>
<comment type="function">
    <text evidence="1">Plays an important role in the de novo pathway and in the salvage pathway of purine nucleotide biosynthesis. Catalyzes the first committed step in the biosynthesis of AMP from IMP (By similarity).</text>
</comment>
<comment type="catalytic activity">
    <reaction evidence="2">
        <text>IMP + L-aspartate + GTP = N(6)-(1,2-dicarboxyethyl)-AMP + GDP + phosphate + 2 H(+)</text>
        <dbReference type="Rhea" id="RHEA:15753"/>
        <dbReference type="ChEBI" id="CHEBI:15378"/>
        <dbReference type="ChEBI" id="CHEBI:29991"/>
        <dbReference type="ChEBI" id="CHEBI:37565"/>
        <dbReference type="ChEBI" id="CHEBI:43474"/>
        <dbReference type="ChEBI" id="CHEBI:57567"/>
        <dbReference type="ChEBI" id="CHEBI:58053"/>
        <dbReference type="ChEBI" id="CHEBI:58189"/>
        <dbReference type="EC" id="6.3.4.4"/>
    </reaction>
</comment>
<comment type="cofactor">
    <cofactor evidence="2">
        <name>Mg(2+)</name>
        <dbReference type="ChEBI" id="CHEBI:18420"/>
    </cofactor>
    <text evidence="2">Binds 1 Mg(2+) ion per subunit.</text>
</comment>
<comment type="pathway">
    <text evidence="2">Purine metabolism; AMP biosynthesis via de novo pathway; AMP from IMP: step 1/2.</text>
</comment>
<comment type="subunit">
    <text evidence="2">Homodimer.</text>
</comment>
<comment type="subcellular location">
    <subcellularLocation>
        <location evidence="2">Cytoplasm</location>
    </subcellularLocation>
</comment>
<comment type="similarity">
    <text evidence="2">Belongs to the adenylosuccinate synthetase family.</text>
</comment>